<sequence>MKEKMQRMVLSLAMVGFMVFGVASAMNNEGKALMAIKGSFSNLVNMLLDWDDVHNSDLCSWRGVFCDNVSYSVVSLNLSSLNLGGEISPAIGDLRNLQSIDLQGNKLAGQIPDEIGNCASLVYLDLSENLLYGDIPFSISKLKQLETLNLKNNQLTGPVPATLTQIPNLKRLDLAGNHLTGEISRLLYWNEVLQYLGLRGNMLTGTLSSDMCQLTGLWYFDVRGNNLTGTIPESIGNCTSFQILDISYNQITGEIPYNIGFLQVATLSLQGNRLTGRIPEVIGLMQALAVLDLSDNELVGPIPPILGNLSFTGKLYLHGNMLTGPIPSELGNMSRLSYLQLNDNKLVGTIPPELGKLEQLFELNLANNRLVGPIPSNISSCAALNQFNVHGNLLSGSIPLAFRNLGSLTYLNLSSNNFKGKIPVELGHIINLDKLDLSGNNFSGSIPLTLGDLEHLLILNLSRNHLSGQLPAEFGNLRSIQMIDVSFNLLSGVIPTELGQLQNLNSLILNNNKLHGKIPDQLTNCFTLVNLNVSFNNLSGIVPPMKNFSRFAPASFVGNPYLCGNWVGSICGPLPKSRVFSRGALICIVLGVITLLCMIFLAVYKSMQQKKILQGSSKQAEGLTKLVILHMDMAIHTFDDIMRVTENLNEKFIIGYGASSTVYKCALKSSRPIAIKRLYNQYPHNLREFETELETIGSIRHRNIVSLHGYALSPTGNLLFYDYMENGSLWDLLHGSLKKVKLDWETRLKIAVGAAQGLAYLHHDCTPRIIHRDIKSSNILLDENFEAHLSDFGIAKSIPASKTHASTYVLGTIGYIDPEYARTSRINEKSDIYSFGIVLLELLTGKKAVDNEANLHQLILSKADDNTVMEAVDPEVTVTCMDLGHIRKTFQLALLCTKRNPLERPTMLEVSRVLLSLVPSLQVAKKLPSLDHSTKKLQQENEVRNPDAEASQWFVQFREVISKSSI</sequence>
<keyword id="KW-0002">3D-structure</keyword>
<keyword id="KW-0025">Alternative splicing</keyword>
<keyword id="KW-0067">ATP-binding</keyword>
<keyword id="KW-1003">Cell membrane</keyword>
<keyword id="KW-0325">Glycoprotein</keyword>
<keyword id="KW-0418">Kinase</keyword>
<keyword id="KW-0433">Leucine-rich repeat</keyword>
<keyword id="KW-0472">Membrane</keyword>
<keyword id="KW-0547">Nucleotide-binding</keyword>
<keyword id="KW-0597">Phosphoprotein</keyword>
<keyword id="KW-0675">Receptor</keyword>
<keyword id="KW-1185">Reference proteome</keyword>
<keyword id="KW-0677">Repeat</keyword>
<keyword id="KW-0723">Serine/threonine-protein kinase</keyword>
<keyword id="KW-0732">Signal</keyword>
<keyword id="KW-0808">Transferase</keyword>
<keyword id="KW-0812">Transmembrane</keyword>
<keyword id="KW-1133">Transmembrane helix</keyword>
<dbReference type="EC" id="2.7.11.1"/>
<dbReference type="EMBL" id="AY244745">
    <property type="protein sequence ID" value="AAP69763.1"/>
    <property type="molecule type" value="mRNA"/>
</dbReference>
<dbReference type="EMBL" id="AB019235">
    <property type="protein sequence ID" value="BAA97187.1"/>
    <property type="status" value="ALT_SEQ"/>
    <property type="molecule type" value="Genomic_DNA"/>
</dbReference>
<dbReference type="EMBL" id="CP002688">
    <property type="protein sequence ID" value="AED97583.1"/>
    <property type="molecule type" value="Genomic_DNA"/>
</dbReference>
<dbReference type="EMBL" id="FJ708810">
    <property type="protein sequence ID" value="ACN59401.1"/>
    <property type="molecule type" value="mRNA"/>
</dbReference>
<dbReference type="EMBL" id="AK118052">
    <property type="protein sequence ID" value="BAC42683.1"/>
    <property type="status" value="ALT_INIT"/>
    <property type="molecule type" value="mRNA"/>
</dbReference>
<dbReference type="RefSeq" id="NP_201029.1">
    <molecule id="C0LGW6-1"/>
    <property type="nucleotide sequence ID" value="NM_125617.3"/>
</dbReference>
<dbReference type="PDB" id="5XJO">
    <property type="method" value="X-ray"/>
    <property type="resolution" value="2.63 A"/>
    <property type="chains" value="A/B=28-566"/>
</dbReference>
<dbReference type="PDB" id="5XJX">
    <property type="method" value="X-ray"/>
    <property type="resolution" value="3.06 A"/>
    <property type="chains" value="A/B/E/G/I/K=24-573"/>
</dbReference>
<dbReference type="PDB" id="5XKJ">
    <property type="method" value="X-ray"/>
    <property type="resolution" value="3.48 A"/>
    <property type="chains" value="A/B=24-572"/>
</dbReference>
<dbReference type="PDBsum" id="5XJO"/>
<dbReference type="PDBsum" id="5XJX"/>
<dbReference type="PDBsum" id="5XKJ"/>
<dbReference type="SMR" id="C0LGW6"/>
<dbReference type="BioGRID" id="21588">
    <property type="interactions" value="37"/>
</dbReference>
<dbReference type="FunCoup" id="C0LGW6">
    <property type="interactions" value="174"/>
</dbReference>
<dbReference type="IntAct" id="C0LGW6">
    <property type="interactions" value="43"/>
</dbReference>
<dbReference type="STRING" id="3702.C0LGW6"/>
<dbReference type="GlyCosmos" id="C0LGW6">
    <property type="glycosylation" value="13 sites, No reported glycans"/>
</dbReference>
<dbReference type="GlyGen" id="C0LGW6">
    <property type="glycosylation" value="13 sites"/>
</dbReference>
<dbReference type="PaxDb" id="3702-AT5G62230.1"/>
<dbReference type="ProteomicsDB" id="220693">
    <molecule id="C0LGW6-1"/>
</dbReference>
<dbReference type="EnsemblPlants" id="AT5G62230.1">
    <molecule id="C0LGW6-1"/>
    <property type="protein sequence ID" value="AT5G62230.1"/>
    <property type="gene ID" value="AT5G62230"/>
</dbReference>
<dbReference type="GeneID" id="836344"/>
<dbReference type="Gramene" id="AT5G62230.1">
    <molecule id="C0LGW6-1"/>
    <property type="protein sequence ID" value="AT5G62230.1"/>
    <property type="gene ID" value="AT5G62230"/>
</dbReference>
<dbReference type="KEGG" id="ath:AT5G62230"/>
<dbReference type="Araport" id="AT5G62230"/>
<dbReference type="TAIR" id="AT5G62230">
    <property type="gene designation" value="ERL1"/>
</dbReference>
<dbReference type="eggNOG" id="ENOG502QTEP">
    <property type="taxonomic scope" value="Eukaryota"/>
</dbReference>
<dbReference type="InParanoid" id="C0LGW6"/>
<dbReference type="OrthoDB" id="676979at2759"/>
<dbReference type="PhylomeDB" id="C0LGW6"/>
<dbReference type="PRO" id="PR:C0LGW6"/>
<dbReference type="Proteomes" id="UP000006548">
    <property type="component" value="Chromosome 5"/>
</dbReference>
<dbReference type="ExpressionAtlas" id="C0LGW6">
    <property type="expression patterns" value="baseline and differential"/>
</dbReference>
<dbReference type="GO" id="GO:0016020">
    <property type="term" value="C:membrane"/>
    <property type="evidence" value="ECO:0000314"/>
    <property type="project" value="TAIR"/>
</dbReference>
<dbReference type="GO" id="GO:0005886">
    <property type="term" value="C:plasma membrane"/>
    <property type="evidence" value="ECO:0007669"/>
    <property type="project" value="UniProtKB-SubCell"/>
</dbReference>
<dbReference type="GO" id="GO:0005524">
    <property type="term" value="F:ATP binding"/>
    <property type="evidence" value="ECO:0007669"/>
    <property type="project" value="UniProtKB-KW"/>
</dbReference>
<dbReference type="GO" id="GO:0106310">
    <property type="term" value="F:protein serine kinase activity"/>
    <property type="evidence" value="ECO:0007669"/>
    <property type="project" value="RHEA"/>
</dbReference>
<dbReference type="GO" id="GO:0004674">
    <property type="term" value="F:protein serine/threonine kinase activity"/>
    <property type="evidence" value="ECO:0007669"/>
    <property type="project" value="UniProtKB-KW"/>
</dbReference>
<dbReference type="GO" id="GO:0033612">
    <property type="term" value="F:receptor serine/threonine kinase binding"/>
    <property type="evidence" value="ECO:0000353"/>
    <property type="project" value="UniProtKB"/>
</dbReference>
<dbReference type="GO" id="GO:0005102">
    <property type="term" value="F:signaling receptor binding"/>
    <property type="evidence" value="ECO:0000353"/>
    <property type="project" value="UniProtKB"/>
</dbReference>
<dbReference type="GO" id="GO:0009553">
    <property type="term" value="P:embryo sac development"/>
    <property type="evidence" value="ECO:0000316"/>
    <property type="project" value="TAIR"/>
</dbReference>
<dbReference type="GO" id="GO:0048481">
    <property type="term" value="P:plant ovule development"/>
    <property type="evidence" value="ECO:0000316"/>
    <property type="project" value="TAIR"/>
</dbReference>
<dbReference type="GO" id="GO:0010103">
    <property type="term" value="P:stomatal complex morphogenesis"/>
    <property type="evidence" value="ECO:0000316"/>
    <property type="project" value="TAIR"/>
</dbReference>
<dbReference type="FunFam" id="1.10.510.10:FF:000290">
    <property type="entry name" value="LRR receptor-like serine/threonine-protein kinase ERECTA"/>
    <property type="match status" value="1"/>
</dbReference>
<dbReference type="FunFam" id="3.30.200.20:FF:000288">
    <property type="entry name" value="LRR receptor-like serine/threonine-protein kinase ERECTA"/>
    <property type="match status" value="1"/>
</dbReference>
<dbReference type="FunFam" id="3.80.10.10:FF:000077">
    <property type="entry name" value="LRR receptor-like serine/threonine-protein kinase ERL1"/>
    <property type="match status" value="1"/>
</dbReference>
<dbReference type="FunFam" id="3.80.10.10:FF:000107">
    <property type="entry name" value="LRR receptor-like serine/threonine-protein kinase ERL1"/>
    <property type="match status" value="1"/>
</dbReference>
<dbReference type="FunFam" id="3.80.10.10:FF:000219">
    <property type="entry name" value="LRR receptor-like serine/threonine-protein kinase ERL1"/>
    <property type="match status" value="1"/>
</dbReference>
<dbReference type="Gene3D" id="3.30.200.20">
    <property type="entry name" value="Phosphorylase Kinase, domain 1"/>
    <property type="match status" value="1"/>
</dbReference>
<dbReference type="Gene3D" id="3.80.10.10">
    <property type="entry name" value="Ribonuclease Inhibitor"/>
    <property type="match status" value="3"/>
</dbReference>
<dbReference type="Gene3D" id="1.10.510.10">
    <property type="entry name" value="Transferase(Phosphotransferase) domain 1"/>
    <property type="match status" value="1"/>
</dbReference>
<dbReference type="InterPro" id="IPR011009">
    <property type="entry name" value="Kinase-like_dom_sf"/>
</dbReference>
<dbReference type="InterPro" id="IPR001611">
    <property type="entry name" value="Leu-rich_rpt"/>
</dbReference>
<dbReference type="InterPro" id="IPR003591">
    <property type="entry name" value="Leu-rich_rpt_typical-subtyp"/>
</dbReference>
<dbReference type="InterPro" id="IPR032675">
    <property type="entry name" value="LRR_dom_sf"/>
</dbReference>
<dbReference type="InterPro" id="IPR013210">
    <property type="entry name" value="LRR_N_plant-typ"/>
</dbReference>
<dbReference type="InterPro" id="IPR051716">
    <property type="entry name" value="Plant_RL_S/T_kinase"/>
</dbReference>
<dbReference type="InterPro" id="IPR000719">
    <property type="entry name" value="Prot_kinase_dom"/>
</dbReference>
<dbReference type="InterPro" id="IPR017441">
    <property type="entry name" value="Protein_kinase_ATP_BS"/>
</dbReference>
<dbReference type="InterPro" id="IPR008271">
    <property type="entry name" value="Ser/Thr_kinase_AS"/>
</dbReference>
<dbReference type="PANTHER" id="PTHR48053">
    <property type="entry name" value="LEUCINE RICH REPEAT FAMILY PROTEIN, EXPRESSED"/>
    <property type="match status" value="1"/>
</dbReference>
<dbReference type="PANTHER" id="PTHR48053:SF120">
    <property type="entry name" value="PROTEIN KINASE DOMAIN-CONTAINING PROTEIN"/>
    <property type="match status" value="1"/>
</dbReference>
<dbReference type="Pfam" id="PF00560">
    <property type="entry name" value="LRR_1"/>
    <property type="match status" value="9"/>
</dbReference>
<dbReference type="Pfam" id="PF13855">
    <property type="entry name" value="LRR_8"/>
    <property type="match status" value="2"/>
</dbReference>
<dbReference type="Pfam" id="PF08263">
    <property type="entry name" value="LRRNT_2"/>
    <property type="match status" value="1"/>
</dbReference>
<dbReference type="Pfam" id="PF00069">
    <property type="entry name" value="Pkinase"/>
    <property type="match status" value="1"/>
</dbReference>
<dbReference type="SMART" id="SM00369">
    <property type="entry name" value="LRR_TYP"/>
    <property type="match status" value="10"/>
</dbReference>
<dbReference type="SMART" id="SM00220">
    <property type="entry name" value="S_TKc"/>
    <property type="match status" value="1"/>
</dbReference>
<dbReference type="SUPFAM" id="SSF52058">
    <property type="entry name" value="L domain-like"/>
    <property type="match status" value="2"/>
</dbReference>
<dbReference type="SUPFAM" id="SSF56112">
    <property type="entry name" value="Protein kinase-like (PK-like)"/>
    <property type="match status" value="1"/>
</dbReference>
<dbReference type="PROSITE" id="PS00107">
    <property type="entry name" value="PROTEIN_KINASE_ATP"/>
    <property type="match status" value="1"/>
</dbReference>
<dbReference type="PROSITE" id="PS50011">
    <property type="entry name" value="PROTEIN_KINASE_DOM"/>
    <property type="match status" value="1"/>
</dbReference>
<dbReference type="PROSITE" id="PS00108">
    <property type="entry name" value="PROTEIN_KINASE_ST"/>
    <property type="match status" value="1"/>
</dbReference>
<feature type="signal peptide" evidence="4">
    <location>
        <begin position="1"/>
        <end position="25"/>
    </location>
</feature>
<feature type="chain" id="PRO_0000387509" description="LRR receptor-like serine/threonine-protein kinase ERL1">
    <location>
        <begin position="26"/>
        <end position="966"/>
    </location>
</feature>
<feature type="topological domain" description="Extracellular" evidence="4">
    <location>
        <begin position="26"/>
        <end position="582"/>
    </location>
</feature>
<feature type="transmembrane region" description="Helical" evidence="4">
    <location>
        <begin position="583"/>
        <end position="603"/>
    </location>
</feature>
<feature type="topological domain" description="Cytoplasmic" evidence="4">
    <location>
        <begin position="604"/>
        <end position="966"/>
    </location>
</feature>
<feature type="repeat" description="LRR 1">
    <location>
        <begin position="40"/>
        <end position="63"/>
    </location>
</feature>
<feature type="repeat" description="LRR 2">
    <location>
        <begin position="75"/>
        <end position="94"/>
    </location>
</feature>
<feature type="repeat" description="LRR 3">
    <location>
        <begin position="95"/>
        <end position="118"/>
    </location>
</feature>
<feature type="repeat" description="LRR 4">
    <location>
        <begin position="120"/>
        <end position="142"/>
    </location>
</feature>
<feature type="repeat" description="LRR 5">
    <location>
        <begin position="143"/>
        <end position="166"/>
    </location>
</feature>
<feature type="repeat" description="LRR 6">
    <location>
        <begin position="168"/>
        <end position="190"/>
    </location>
</feature>
<feature type="repeat" description="LRR 7">
    <location>
        <begin position="192"/>
        <end position="214"/>
    </location>
</feature>
<feature type="repeat" description="LRR 8">
    <location>
        <begin position="215"/>
        <end position="238"/>
    </location>
</feature>
<feature type="repeat" description="LRR 9">
    <location>
        <begin position="239"/>
        <end position="261"/>
    </location>
</feature>
<feature type="repeat" description="LRR 10">
    <location>
        <begin position="262"/>
        <end position="285"/>
    </location>
</feature>
<feature type="repeat" description="LRR 11">
    <location>
        <begin position="286"/>
        <end position="311"/>
    </location>
</feature>
<feature type="repeat" description="LRR 12">
    <location>
        <begin position="313"/>
        <end position="333"/>
    </location>
</feature>
<feature type="repeat" description="LRR 13">
    <location>
        <begin position="334"/>
        <end position="357"/>
    </location>
</feature>
<feature type="repeat" description="LRR 14">
    <location>
        <begin position="359"/>
        <end position="381"/>
    </location>
</feature>
<feature type="repeat" description="LRR 15">
    <location>
        <begin position="383"/>
        <end position="404"/>
    </location>
</feature>
<feature type="repeat" description="LRR 16">
    <location>
        <begin position="405"/>
        <end position="429"/>
    </location>
</feature>
<feature type="repeat" description="LRR 17">
    <location>
        <begin position="431"/>
        <end position="453"/>
    </location>
</feature>
<feature type="repeat" description="LRR 18">
    <location>
        <begin position="454"/>
        <end position="476"/>
    </location>
</feature>
<feature type="repeat" description="LRR 19">
    <location>
        <begin position="478"/>
        <end position="500"/>
    </location>
</feature>
<feature type="repeat" description="LRR 20">
    <location>
        <begin position="501"/>
        <end position="525"/>
    </location>
</feature>
<feature type="repeat" description="LRR 21">
    <location>
        <begin position="527"/>
        <end position="550"/>
    </location>
</feature>
<feature type="domain" description="Protein kinase" evidence="5">
    <location>
        <begin position="648"/>
        <end position="921"/>
    </location>
</feature>
<feature type="active site" description="Proton acceptor" evidence="5 6">
    <location>
        <position position="773"/>
    </location>
</feature>
<feature type="binding site" evidence="5">
    <location>
        <begin position="654"/>
        <end position="662"/>
    </location>
    <ligand>
        <name>ATP</name>
        <dbReference type="ChEBI" id="CHEBI:30616"/>
    </ligand>
</feature>
<feature type="binding site" evidence="5">
    <location>
        <position position="676"/>
    </location>
    <ligand>
        <name>ATP</name>
        <dbReference type="ChEBI" id="CHEBI:30616"/>
    </ligand>
</feature>
<feature type="modified residue" description="Phosphothreonine" evidence="2">
    <location>
        <position position="637"/>
    </location>
</feature>
<feature type="modified residue" description="Phosphothreonine" evidence="2">
    <location>
        <position position="645"/>
    </location>
</feature>
<feature type="modified residue" description="Phosphotyrosine" evidence="2">
    <location>
        <position position="721"/>
    </location>
</feature>
<feature type="modified residue" description="Phosphotyrosine" evidence="1">
    <location>
        <position position="760"/>
    </location>
</feature>
<feature type="modified residue" description="Phosphotyrosine" evidence="1">
    <location>
        <position position="815"/>
    </location>
</feature>
<feature type="modified residue" description="Phosphothreonine" evidence="3">
    <location>
        <position position="823"/>
    </location>
</feature>
<feature type="glycosylation site" description="N-linked (GlcNAc...) asparagine" evidence="4">
    <location>
        <position position="68"/>
    </location>
</feature>
<feature type="glycosylation site" description="N-linked (GlcNAc...) asparagine" evidence="4">
    <location>
        <position position="77"/>
    </location>
</feature>
<feature type="glycosylation site" description="N-linked (GlcNAc...) asparagine" evidence="4">
    <location>
        <position position="226"/>
    </location>
</feature>
<feature type="glycosylation site" description="N-linked (GlcNAc...) asparagine" evidence="4">
    <location>
        <position position="237"/>
    </location>
</feature>
<feature type="glycosylation site" description="N-linked (GlcNAc...) asparagine" evidence="4">
    <location>
        <position position="308"/>
    </location>
</feature>
<feature type="glycosylation site" description="N-linked (GlcNAc...) asparagine" evidence="4">
    <location>
        <position position="332"/>
    </location>
</feature>
<feature type="glycosylation site" description="N-linked (GlcNAc...) asparagine" evidence="4">
    <location>
        <position position="377"/>
    </location>
</feature>
<feature type="glycosylation site" description="N-linked (GlcNAc...) asparagine" evidence="4">
    <location>
        <position position="412"/>
    </location>
</feature>
<feature type="glycosylation site" description="N-linked (GlcNAc...) asparagine" evidence="4">
    <location>
        <position position="441"/>
    </location>
</feature>
<feature type="glycosylation site" description="N-linked (GlcNAc...) asparagine" evidence="4">
    <location>
        <position position="460"/>
    </location>
</feature>
<feature type="glycosylation site" description="N-linked (GlcNAc...) asparagine" evidence="4">
    <location>
        <position position="532"/>
    </location>
</feature>
<feature type="glycosylation site" description="N-linked (GlcNAc...) asparagine" evidence="4">
    <location>
        <position position="537"/>
    </location>
</feature>
<feature type="glycosylation site" description="N-linked (GlcNAc...) asparagine" evidence="4">
    <location>
        <position position="547"/>
    </location>
</feature>
<feature type="sequence conflict" description="In Ref. 1; AAP69763." evidence="16" ref="1">
    <original>N</original>
    <variation>S</variation>
    <location>
        <position position="368"/>
    </location>
</feature>
<feature type="sequence conflict" description="In Ref. 5; BAC42683." evidence="16" ref="5">
    <original>S</original>
    <variation>F</variation>
    <location>
        <position position="670"/>
    </location>
</feature>
<feature type="sequence conflict" description="In Ref. 1; AAP69763." evidence="16" ref="1">
    <original>D</original>
    <variation>G</variation>
    <location>
        <position position="743"/>
    </location>
</feature>
<feature type="helix" evidence="18">
    <location>
        <begin position="29"/>
        <end position="37"/>
    </location>
</feature>
<feature type="strand" evidence="18">
    <location>
        <begin position="44"/>
        <end position="47"/>
    </location>
</feature>
<feature type="turn" evidence="18">
    <location>
        <begin position="52"/>
        <end position="54"/>
    </location>
</feature>
<feature type="helix" evidence="18">
    <location>
        <begin position="58"/>
        <end position="60"/>
    </location>
</feature>
<feature type="strand" evidence="18">
    <location>
        <begin position="64"/>
        <end position="66"/>
    </location>
</feature>
<feature type="turn" evidence="18">
    <location>
        <begin position="68"/>
        <end position="70"/>
    </location>
</feature>
<feature type="strand" evidence="18">
    <location>
        <begin position="73"/>
        <end position="77"/>
    </location>
</feature>
<feature type="helix" evidence="18">
    <location>
        <begin position="89"/>
        <end position="93"/>
    </location>
</feature>
<feature type="strand" evidence="18">
    <location>
        <begin position="99"/>
        <end position="101"/>
    </location>
</feature>
<feature type="strand" evidence="19">
    <location>
        <begin position="108"/>
        <end position="110"/>
    </location>
</feature>
<feature type="helix" evidence="18">
    <location>
        <begin position="113"/>
        <end position="117"/>
    </location>
</feature>
<feature type="strand" evidence="18">
    <location>
        <begin position="123"/>
        <end position="125"/>
    </location>
</feature>
<feature type="helix" evidence="18">
    <location>
        <begin position="137"/>
        <end position="141"/>
    </location>
</feature>
<feature type="strand" evidence="18">
    <location>
        <begin position="147"/>
        <end position="149"/>
    </location>
</feature>
<feature type="strand" evidence="18">
    <location>
        <begin position="152"/>
        <end position="157"/>
    </location>
</feature>
<feature type="helix" evidence="18">
    <location>
        <begin position="161"/>
        <end position="165"/>
    </location>
</feature>
<feature type="strand" evidence="18">
    <location>
        <begin position="171"/>
        <end position="173"/>
    </location>
</feature>
<feature type="strand" evidence="18">
    <location>
        <begin position="176"/>
        <end position="179"/>
    </location>
</feature>
<feature type="helix" evidence="18">
    <location>
        <begin position="185"/>
        <end position="188"/>
    </location>
</feature>
<feature type="strand" evidence="18">
    <location>
        <begin position="195"/>
        <end position="197"/>
    </location>
</feature>
<feature type="helix" evidence="18">
    <location>
        <begin position="209"/>
        <end position="213"/>
    </location>
</feature>
<feature type="strand" evidence="18">
    <location>
        <begin position="219"/>
        <end position="221"/>
    </location>
</feature>
<feature type="helix" evidence="18">
    <location>
        <begin position="233"/>
        <end position="237"/>
    </location>
</feature>
<feature type="strand" evidence="18">
    <location>
        <begin position="242"/>
        <end position="245"/>
    </location>
</feature>
<feature type="helix" evidence="18">
    <location>
        <begin position="257"/>
        <end position="261"/>
    </location>
</feature>
<feature type="strand" evidence="18">
    <location>
        <begin position="265"/>
        <end position="268"/>
    </location>
</feature>
<feature type="helix" evidence="18">
    <location>
        <begin position="280"/>
        <end position="284"/>
    </location>
</feature>
<feature type="strand" evidence="18">
    <location>
        <begin position="289"/>
        <end position="292"/>
    </location>
</feature>
<feature type="strand" evidence="18">
    <location>
        <begin position="295"/>
        <end position="301"/>
    </location>
</feature>
<feature type="helix" evidence="18">
    <location>
        <begin position="304"/>
        <end position="308"/>
    </location>
</feature>
<feature type="strand" evidence="18">
    <location>
        <begin position="314"/>
        <end position="316"/>
    </location>
</feature>
<feature type="strand" evidence="18">
    <location>
        <begin position="319"/>
        <end position="325"/>
    </location>
</feature>
<feature type="helix" evidence="18">
    <location>
        <begin position="328"/>
        <end position="332"/>
    </location>
</feature>
<feature type="strand" evidence="18">
    <location>
        <begin position="338"/>
        <end position="340"/>
    </location>
</feature>
<feature type="strand" evidence="19">
    <location>
        <begin position="343"/>
        <end position="346"/>
    </location>
</feature>
<feature type="helix" evidence="18">
    <location>
        <begin position="352"/>
        <end position="355"/>
    </location>
</feature>
<feature type="strand" evidence="18">
    <location>
        <begin position="362"/>
        <end position="364"/>
    </location>
</feature>
<feature type="strand" evidence="18">
    <location>
        <begin position="367"/>
        <end position="370"/>
    </location>
</feature>
<feature type="helix" evidence="18">
    <location>
        <begin position="376"/>
        <end position="380"/>
    </location>
</feature>
<feature type="strand" evidence="18">
    <location>
        <begin position="386"/>
        <end position="388"/>
    </location>
</feature>
<feature type="strand" evidence="19">
    <location>
        <begin position="392"/>
        <end position="394"/>
    </location>
</feature>
<feature type="strand" evidence="18">
    <location>
        <begin position="395"/>
        <end position="397"/>
    </location>
</feature>
<feature type="helix" evidence="18">
    <location>
        <begin position="400"/>
        <end position="404"/>
    </location>
</feature>
<feature type="strand" evidence="18">
    <location>
        <begin position="409"/>
        <end position="412"/>
    </location>
</feature>
<feature type="strand" evidence="18">
    <location>
        <begin position="419"/>
        <end position="421"/>
    </location>
</feature>
<feature type="helix" evidence="18">
    <location>
        <begin position="424"/>
        <end position="428"/>
    </location>
</feature>
<feature type="strand" evidence="18">
    <location>
        <begin position="434"/>
        <end position="436"/>
    </location>
</feature>
<feature type="strand" evidence="18">
    <location>
        <begin position="439"/>
        <end position="445"/>
    </location>
</feature>
<feature type="helix" evidence="18">
    <location>
        <begin position="448"/>
        <end position="452"/>
    </location>
</feature>
<feature type="strand" evidence="18">
    <location>
        <begin position="458"/>
        <end position="460"/>
    </location>
</feature>
<feature type="strand" evidence="18">
    <location>
        <begin position="463"/>
        <end position="469"/>
    </location>
</feature>
<feature type="helix" evidence="18">
    <location>
        <begin position="472"/>
        <end position="476"/>
    </location>
</feature>
<feature type="strand" evidence="18">
    <location>
        <begin position="482"/>
        <end position="484"/>
    </location>
</feature>
<feature type="strand" evidence="20">
    <location>
        <begin position="487"/>
        <end position="490"/>
    </location>
</feature>
<feature type="strand" evidence="19">
    <location>
        <begin position="491"/>
        <end position="493"/>
    </location>
</feature>
<feature type="helix" evidence="18">
    <location>
        <begin position="496"/>
        <end position="500"/>
    </location>
</feature>
<feature type="strand" evidence="18">
    <location>
        <begin position="506"/>
        <end position="508"/>
    </location>
</feature>
<feature type="strand" evidence="18">
    <location>
        <begin position="511"/>
        <end position="516"/>
    </location>
</feature>
<feature type="helix" evidence="18">
    <location>
        <begin position="520"/>
        <end position="524"/>
    </location>
</feature>
<feature type="strand" evidence="18">
    <location>
        <begin position="530"/>
        <end position="532"/>
    </location>
</feature>
<feature type="strand" evidence="18">
    <location>
        <begin position="535"/>
        <end position="538"/>
    </location>
</feature>
<feature type="helix" evidence="19">
    <location>
        <begin position="548"/>
        <end position="550"/>
    </location>
</feature>
<feature type="helix" evidence="19">
    <location>
        <begin position="553"/>
        <end position="555"/>
    </location>
</feature>
<comment type="function">
    <text evidence="7 8 9 10 11 13">Receptor kinase that regulates inflorescence architecture and organ shape as well as stomatal patterning, including density and clustering, together with ER and ERL2. Redundantly involved with ER in procambial development regulation. Forms a functional ligand-receptor pair with EPF1 (AC Q8S8I4) (PubMed:22241782). Forms a constitutive complex with TMM involved in the recognition of the stomatal regulatory peptides EPF1, EPF2 and EPFL9/STOMAGEN (PubMed:28536146).</text>
</comment>
<comment type="catalytic activity">
    <reaction>
        <text>L-seryl-[protein] + ATP = O-phospho-L-seryl-[protein] + ADP + H(+)</text>
        <dbReference type="Rhea" id="RHEA:17989"/>
        <dbReference type="Rhea" id="RHEA-COMP:9863"/>
        <dbReference type="Rhea" id="RHEA-COMP:11604"/>
        <dbReference type="ChEBI" id="CHEBI:15378"/>
        <dbReference type="ChEBI" id="CHEBI:29999"/>
        <dbReference type="ChEBI" id="CHEBI:30616"/>
        <dbReference type="ChEBI" id="CHEBI:83421"/>
        <dbReference type="ChEBI" id="CHEBI:456216"/>
        <dbReference type="EC" id="2.7.11.1"/>
    </reaction>
</comment>
<comment type="catalytic activity">
    <reaction>
        <text>L-threonyl-[protein] + ATP = O-phospho-L-threonyl-[protein] + ADP + H(+)</text>
        <dbReference type="Rhea" id="RHEA:46608"/>
        <dbReference type="Rhea" id="RHEA-COMP:11060"/>
        <dbReference type="Rhea" id="RHEA-COMP:11605"/>
        <dbReference type="ChEBI" id="CHEBI:15378"/>
        <dbReference type="ChEBI" id="CHEBI:30013"/>
        <dbReference type="ChEBI" id="CHEBI:30616"/>
        <dbReference type="ChEBI" id="CHEBI:61977"/>
        <dbReference type="ChEBI" id="CHEBI:456216"/>
        <dbReference type="EC" id="2.7.11.1"/>
    </reaction>
</comment>
<comment type="subunit">
    <text evidence="10 12 13">Homodimer and heterodimer with ERECTA and TMM. Interacts with EPF1 and EPF2. Interacts with SERK1, SERK2, SERK3/BAK1 and SERK4 in a EPF1-induced manner (PubMed:26320950).</text>
</comment>
<comment type="interaction">
    <interactant intactId="EBI-16914248">
        <id>C0LGW6</id>
    </interactant>
    <interactant intactId="EBI-16902452">
        <id>Q8VYT3</id>
        <label>At4g30520</label>
    </interactant>
    <organismsDiffer>false</organismsDiffer>
    <experiments>3</experiments>
</comment>
<comment type="interaction">
    <interactant intactId="EBI-16914248">
        <id>C0LGW6</id>
    </interactant>
    <interactant intactId="EBI-617138">
        <id>Q94F62</id>
        <label>BAK1</label>
    </interactant>
    <organismsDiffer>false</organismsDiffer>
    <experiments>4</experiments>
</comment>
<comment type="interaction">
    <interactant intactId="EBI-16914248">
        <id>C0LGW6</id>
    </interactant>
    <interactant intactId="EBI-17069471">
        <id>O49545</id>
        <label>BAM1</label>
    </interactant>
    <organismsDiffer>false</organismsDiffer>
    <experiments>2</experiments>
</comment>
<comment type="interaction">
    <interactant intactId="EBI-16914248">
        <id>C0LGW6</id>
    </interactant>
    <interactant intactId="EBI-16895926">
        <id>Q6XAT2</id>
        <label>ERL2</label>
    </interactant>
    <organismsDiffer>false</organismsDiffer>
    <experiments>2</experiments>
</comment>
<comment type="interaction">
    <interactant intactId="EBI-16914248">
        <id>C0LGW6</id>
    </interactant>
    <interactant intactId="EBI-16924837">
        <id>Q9C8I6</id>
        <label>IOS1</label>
    </interactant>
    <organismsDiffer>false</organismsDiffer>
    <experiments>4</experiments>
</comment>
<comment type="interaction">
    <interactant intactId="EBI-16914248">
        <id>C0LGW6</id>
    </interactant>
    <interactant intactId="EBI-20651739">
        <id>Q9ZVD4</id>
        <label>LRR-RLK</label>
    </interactant>
    <organismsDiffer>false</organismsDiffer>
    <experiments>2</experiments>
</comment>
<comment type="interaction">
    <interactant intactId="EBI-16914248">
        <id>C0LGW6</id>
    </interactant>
    <interactant intactId="EBI-1238953">
        <id>Q9ZRF9</id>
        <label>RPK1</label>
    </interactant>
    <organismsDiffer>false</organismsDiffer>
    <experiments>3</experiments>
</comment>
<comment type="interaction">
    <interactant intactId="EBI-16914248">
        <id>C0LGW6</id>
    </interactant>
    <interactant intactId="EBI-6290483">
        <id>Q9SKG5</id>
        <label>SERK4</label>
    </interactant>
    <organismsDiffer>false</organismsDiffer>
    <experiments>4</experiments>
</comment>
<comment type="interaction">
    <interactant intactId="EBI-16914248">
        <id>C0LGW6</id>
    </interactant>
    <interactant intactId="EBI-16954301">
        <id>Q9C8M9</id>
        <label>SRF6</label>
    </interactant>
    <organismsDiffer>false</organismsDiffer>
    <experiments>2</experiments>
</comment>
<comment type="interaction">
    <interactant intactId="EBI-16914248">
        <id>C0LGW6</id>
    </interactant>
    <interactant intactId="EBI-17072125">
        <id>Q8RWZ1</id>
        <label>SUB</label>
    </interactant>
    <organismsDiffer>false</organismsDiffer>
    <experiments>4</experiments>
</comment>
<comment type="subcellular location">
    <subcellularLocation>
        <location evidence="10 15">Cell membrane</location>
        <topology evidence="16">Single-pass type I membrane protein</topology>
    </subcellularLocation>
</comment>
<comment type="alternative products">
    <event type="alternative splicing"/>
    <isoform>
        <id>C0LGW6-1</id>
        <name>1</name>
        <sequence type="displayed"/>
    </isoform>
    <text>A number of isoforms are produced. According to EST sequences.</text>
</comment>
<comment type="tissue specificity">
    <text evidence="7">Mostly expressed in developing organs, including bud clusters, flowers, siliques and young rosettes. Also detected in mature aboveground organs, such as leaves, stems and pedicels, but barely in roots.</text>
</comment>
<comment type="developmental stage">
    <text evidence="7">At the vegetative stage, strongly expressed in the shoot meristem, leaf primordia and juvenile leaves. At the reproductive stage, localized in the young developing flowers. Expressed in inflorescence meristem and is up-regulated during flower initiation and formation of flower organs. Also found in cells that differentiate into pedicels.</text>
</comment>
<comment type="domain">
    <text evidence="10">The kinase domain is not required for ligand binding.</text>
</comment>
<comment type="similarity">
    <text evidence="5">Belongs to the protein kinase superfamily. Ser/Thr protein kinase family.</text>
</comment>
<comment type="sequence caution" evidence="16">
    <conflict type="erroneous gene model prediction">
        <sequence resource="EMBL-CDS" id="BAA97187"/>
    </conflict>
</comment>
<comment type="sequence caution" evidence="16">
    <conflict type="erroneous initiation">
        <sequence resource="EMBL-CDS" id="BAC42683"/>
    </conflict>
    <text>Truncated N-terminus.</text>
</comment>
<name>ERL1_ARATH</name>
<accession>C0LGW6</accession>
<accession>Q6XAT3</accession>
<accession>Q8GXT4</accession>
<accession>Q9LVB3</accession>
<gene>
    <name evidence="15" type="primary">ERL1</name>
    <name evidence="17" type="ordered locus">At5g62230</name>
    <name evidence="14" type="ORF">MMI9.14</name>
</gene>
<evidence type="ECO:0000250" key="1">
    <source>
        <dbReference type="UniProtKB" id="C0LGT6"/>
    </source>
</evidence>
<evidence type="ECO:0000250" key="2">
    <source>
        <dbReference type="UniProtKB" id="O22476"/>
    </source>
</evidence>
<evidence type="ECO:0000250" key="3">
    <source>
        <dbReference type="UniProtKB" id="Q9M0G7"/>
    </source>
</evidence>
<evidence type="ECO:0000255" key="4"/>
<evidence type="ECO:0000255" key="5">
    <source>
        <dbReference type="PROSITE-ProRule" id="PRU00159"/>
    </source>
</evidence>
<evidence type="ECO:0000255" key="6">
    <source>
        <dbReference type="PROSITE-ProRule" id="PRU10027"/>
    </source>
</evidence>
<evidence type="ECO:0000269" key="7">
    <source>
    </source>
</evidence>
<evidence type="ECO:0000269" key="8">
    <source>
    </source>
</evidence>
<evidence type="ECO:0000269" key="9">
    <source>
    </source>
</evidence>
<evidence type="ECO:0000269" key="10">
    <source>
    </source>
</evidence>
<evidence type="ECO:0000269" key="11">
    <source>
    </source>
</evidence>
<evidence type="ECO:0000269" key="12">
    <source>
    </source>
</evidence>
<evidence type="ECO:0000269" key="13">
    <source>
    </source>
</evidence>
<evidence type="ECO:0000303" key="14">
    <source>
    </source>
</evidence>
<evidence type="ECO:0000303" key="15">
    <source>
    </source>
</evidence>
<evidence type="ECO:0000305" key="16"/>
<evidence type="ECO:0000312" key="17">
    <source>
        <dbReference type="Araport" id="AT5G62230"/>
    </source>
</evidence>
<evidence type="ECO:0007829" key="18">
    <source>
        <dbReference type="PDB" id="5XJO"/>
    </source>
</evidence>
<evidence type="ECO:0007829" key="19">
    <source>
        <dbReference type="PDB" id="5XJX"/>
    </source>
</evidence>
<evidence type="ECO:0007829" key="20">
    <source>
        <dbReference type="PDB" id="5XKJ"/>
    </source>
</evidence>
<protein>
    <recommendedName>
        <fullName evidence="15">LRR receptor-like serine/threonine-protein kinase ERL1</fullName>
        <ecNumber>2.7.11.1</ecNumber>
    </recommendedName>
    <alternativeName>
        <fullName>Protein ERECTA-like kinase 1</fullName>
    </alternativeName>
</protein>
<proteinExistence type="evidence at protein level"/>
<organism>
    <name type="scientific">Arabidopsis thaliana</name>
    <name type="common">Mouse-ear cress</name>
    <dbReference type="NCBI Taxonomy" id="3702"/>
    <lineage>
        <taxon>Eukaryota</taxon>
        <taxon>Viridiplantae</taxon>
        <taxon>Streptophyta</taxon>
        <taxon>Embryophyta</taxon>
        <taxon>Tracheophyta</taxon>
        <taxon>Spermatophyta</taxon>
        <taxon>Magnoliopsida</taxon>
        <taxon>eudicotyledons</taxon>
        <taxon>Gunneridae</taxon>
        <taxon>Pentapetalae</taxon>
        <taxon>rosids</taxon>
        <taxon>malvids</taxon>
        <taxon>Brassicales</taxon>
        <taxon>Brassicaceae</taxon>
        <taxon>Camelineae</taxon>
        <taxon>Arabidopsis</taxon>
    </lineage>
</organism>
<reference key="1">
    <citation type="journal article" date="2004" name="Development">
        <title>Synergistic interaction of three ERECTA-family receptor-like kinases controls Arabidopsis organ growth and flower development by promoting cell proliferation.</title>
        <authorList>
            <person name="Shpak E.D."/>
            <person name="Berthiaume C.T."/>
            <person name="Hill E.J."/>
            <person name="Torii K.U."/>
        </authorList>
    </citation>
    <scope>NUCLEOTIDE SEQUENCE [MRNA]</scope>
    <scope>FUNCTION</scope>
    <scope>DEVELOPMENTAL STAGE</scope>
    <scope>TISSUE SPECIFICITY</scope>
    <scope>SUBCELLULAR LOCATION</scope>
    <source>
        <strain>cv. Columbia</strain>
    </source>
</reference>
<reference key="2">
    <citation type="journal article" date="2000" name="DNA Res.">
        <title>Structural analysis of Arabidopsis thaliana chromosome 5. X. Sequence features of the regions of 3,076,755 bp covered by sixty P1 and TAC clones.</title>
        <authorList>
            <person name="Sato S."/>
            <person name="Nakamura Y."/>
            <person name="Kaneko T."/>
            <person name="Katoh T."/>
            <person name="Asamizu E."/>
            <person name="Kotani H."/>
            <person name="Tabata S."/>
        </authorList>
    </citation>
    <scope>NUCLEOTIDE SEQUENCE [LARGE SCALE GENOMIC DNA]</scope>
    <source>
        <strain>cv. Columbia</strain>
    </source>
</reference>
<reference key="3">
    <citation type="journal article" date="2017" name="Plant J.">
        <title>Araport11: a complete reannotation of the Arabidopsis thaliana reference genome.</title>
        <authorList>
            <person name="Cheng C.Y."/>
            <person name="Krishnakumar V."/>
            <person name="Chan A.P."/>
            <person name="Thibaud-Nissen F."/>
            <person name="Schobel S."/>
            <person name="Town C.D."/>
        </authorList>
    </citation>
    <scope>GENOME REANNOTATION</scope>
    <source>
        <strain>cv. Columbia</strain>
    </source>
</reference>
<reference key="4">
    <citation type="journal article" date="2010" name="BMC Genomics">
        <title>Genome-wide cloning and sequence analysis of leucine-rich repeat receptor-like protein kinase genes in Arabidopsis thaliana.</title>
        <authorList>
            <person name="Gou X."/>
            <person name="He K."/>
            <person name="Yang H."/>
            <person name="Yuan T."/>
            <person name="Lin H."/>
            <person name="Clouse S.D."/>
            <person name="Li J."/>
        </authorList>
    </citation>
    <scope>NUCLEOTIDE SEQUENCE [LARGE SCALE MRNA]</scope>
    <source>
        <strain>cv. Columbia</strain>
    </source>
</reference>
<reference key="5">
    <citation type="journal article" date="2002" name="Science">
        <title>Functional annotation of a full-length Arabidopsis cDNA collection.</title>
        <authorList>
            <person name="Seki M."/>
            <person name="Narusaka M."/>
            <person name="Kamiya A."/>
            <person name="Ishida J."/>
            <person name="Satou M."/>
            <person name="Sakurai T."/>
            <person name="Nakajima M."/>
            <person name="Enju A."/>
            <person name="Akiyama K."/>
            <person name="Oono Y."/>
            <person name="Muramatsu M."/>
            <person name="Hayashizaki Y."/>
            <person name="Kawai J."/>
            <person name="Carninci P."/>
            <person name="Itoh M."/>
            <person name="Ishii Y."/>
            <person name="Arakawa T."/>
            <person name="Shibata K."/>
            <person name="Shinagawa A."/>
            <person name="Shinozaki K."/>
        </authorList>
    </citation>
    <scope>NUCLEOTIDE SEQUENCE [LARGE SCALE MRNA] OF 638-966</scope>
    <source>
        <strain>cv. Columbia</strain>
    </source>
</reference>
<reference key="6">
    <citation type="journal article" date="2005" name="Science">
        <title>Stomatal patterning and differentiation by synergistic interactions of receptor kinases.</title>
        <authorList>
            <person name="Shpak E.D."/>
            <person name="McAbee J.M."/>
            <person name="Pillitteri L.J."/>
            <person name="Torii K.U."/>
        </authorList>
    </citation>
    <scope>FUNCTION</scope>
</reference>
<reference key="7">
    <citation type="journal article" date="2007" name="Development">
        <title>Haploinsufficiency after successive loss of signaling reveals a role for ERECTA-family genes in Arabidopsis ovule development.</title>
        <authorList>
            <person name="Pillitteri L.J."/>
            <person name="Bemis S.M."/>
            <person name="Shpak E.D."/>
            <person name="Torii K.U."/>
        </authorList>
    </citation>
    <scope>FUNCTION</scope>
</reference>
<reference key="8">
    <citation type="journal article" date="2012" name="Genes Dev.">
        <title>Direct interaction of ligand-receptor pairs specifying stomatal patterning.</title>
        <authorList>
            <person name="Lee J.S."/>
            <person name="Kuroha T."/>
            <person name="Hnilova M."/>
            <person name="Khatayevich D."/>
            <person name="Kanaoka M.M."/>
            <person name="McAbee J.M."/>
            <person name="Sarikaya M."/>
            <person name="Tamerler C."/>
            <person name="Torii K.U."/>
        </authorList>
    </citation>
    <scope>FUNCTION</scope>
    <scope>SUBCELLULAR LOCATION</scope>
    <scope>DOMAIN</scope>
    <scope>INTERACTION WITH ERECTA; TMM; EPF1 AND EPF2</scope>
    <scope>SUBUNIT</scope>
</reference>
<reference key="9">
    <citation type="journal article" date="2013" name="J. Exp. Bot.">
        <title>Regulation of plant vascular stem cells by endodermis-derived EPFL-family peptide hormones and phloem-expressed ERECTA-family receptor kinases.</title>
        <authorList>
            <person name="Uchida N."/>
            <person name="Tasaka M."/>
        </authorList>
    </citation>
    <scope>FUNCTION</scope>
</reference>
<reference key="10">
    <citation type="journal article" date="2015" name="Curr. Biol.">
        <title>Differential function of Arabidopsis SERK family receptor-like kinases in stomatal patterning.</title>
        <authorList>
            <person name="Meng X."/>
            <person name="Chen X."/>
            <person name="Mang H."/>
            <person name="Liu C."/>
            <person name="Yu X."/>
            <person name="Gao X."/>
            <person name="Torii K.U."/>
            <person name="He P."/>
            <person name="Shan L."/>
        </authorList>
    </citation>
    <scope>INTERACTION WITH SERK1; SERK2; SERK3/BAK1 AND SERK4</scope>
</reference>
<reference key="11">
    <citation type="journal article" date="2017" name="Genes Dev.">
        <title>A receptor-like protein acts as a specificity switch for the regulation of stomatal development.</title>
        <authorList>
            <person name="Lin G."/>
            <person name="Zhang L."/>
            <person name="Han Z."/>
            <person name="Yang X."/>
            <person name="Liu W."/>
            <person name="Li E."/>
            <person name="Chang J."/>
            <person name="Qi Y."/>
            <person name="Shpak E.D."/>
            <person name="Chai J."/>
        </authorList>
    </citation>
    <scope>FUNCTION</scope>
    <scope>SUBUNIT</scope>
    <scope>INTERACTION WITH TMM</scope>
</reference>